<dbReference type="EMBL" id="AP008232">
    <property type="protein sequence ID" value="BAE75554.1"/>
    <property type="molecule type" value="Genomic_DNA"/>
</dbReference>
<dbReference type="RefSeq" id="WP_009639175.1">
    <property type="nucleotide sequence ID" value="NZ_LN854557.1"/>
</dbReference>
<dbReference type="SMR" id="Q2NQM1"/>
<dbReference type="STRING" id="343509.SG2279"/>
<dbReference type="GeneID" id="95418945"/>
<dbReference type="KEGG" id="sgl:SG2279"/>
<dbReference type="eggNOG" id="COG0051">
    <property type="taxonomic scope" value="Bacteria"/>
</dbReference>
<dbReference type="HOGENOM" id="CLU_122625_1_3_6"/>
<dbReference type="OrthoDB" id="9804464at2"/>
<dbReference type="BioCyc" id="SGLO343509:SGP1_RS20845-MONOMER"/>
<dbReference type="Proteomes" id="UP000001932">
    <property type="component" value="Chromosome"/>
</dbReference>
<dbReference type="GO" id="GO:1990904">
    <property type="term" value="C:ribonucleoprotein complex"/>
    <property type="evidence" value="ECO:0007669"/>
    <property type="project" value="UniProtKB-KW"/>
</dbReference>
<dbReference type="GO" id="GO:0005840">
    <property type="term" value="C:ribosome"/>
    <property type="evidence" value="ECO:0007669"/>
    <property type="project" value="UniProtKB-KW"/>
</dbReference>
<dbReference type="GO" id="GO:0003735">
    <property type="term" value="F:structural constituent of ribosome"/>
    <property type="evidence" value="ECO:0007669"/>
    <property type="project" value="InterPro"/>
</dbReference>
<dbReference type="GO" id="GO:0000049">
    <property type="term" value="F:tRNA binding"/>
    <property type="evidence" value="ECO:0007669"/>
    <property type="project" value="UniProtKB-UniRule"/>
</dbReference>
<dbReference type="GO" id="GO:0006412">
    <property type="term" value="P:translation"/>
    <property type="evidence" value="ECO:0007669"/>
    <property type="project" value="UniProtKB-UniRule"/>
</dbReference>
<dbReference type="FunFam" id="3.30.70.600:FF:000001">
    <property type="entry name" value="30S ribosomal protein S10"/>
    <property type="match status" value="1"/>
</dbReference>
<dbReference type="Gene3D" id="3.30.70.600">
    <property type="entry name" value="Ribosomal protein S10 domain"/>
    <property type="match status" value="1"/>
</dbReference>
<dbReference type="HAMAP" id="MF_00508">
    <property type="entry name" value="Ribosomal_uS10"/>
    <property type="match status" value="1"/>
</dbReference>
<dbReference type="InterPro" id="IPR001848">
    <property type="entry name" value="Ribosomal_uS10"/>
</dbReference>
<dbReference type="InterPro" id="IPR018268">
    <property type="entry name" value="Ribosomal_uS10_CS"/>
</dbReference>
<dbReference type="InterPro" id="IPR027486">
    <property type="entry name" value="Ribosomal_uS10_dom"/>
</dbReference>
<dbReference type="InterPro" id="IPR036838">
    <property type="entry name" value="Ribosomal_uS10_dom_sf"/>
</dbReference>
<dbReference type="NCBIfam" id="NF001861">
    <property type="entry name" value="PRK00596.1"/>
    <property type="match status" value="1"/>
</dbReference>
<dbReference type="NCBIfam" id="TIGR01049">
    <property type="entry name" value="rpsJ_bact"/>
    <property type="match status" value="1"/>
</dbReference>
<dbReference type="PANTHER" id="PTHR11700">
    <property type="entry name" value="30S RIBOSOMAL PROTEIN S10 FAMILY MEMBER"/>
    <property type="match status" value="1"/>
</dbReference>
<dbReference type="Pfam" id="PF00338">
    <property type="entry name" value="Ribosomal_S10"/>
    <property type="match status" value="1"/>
</dbReference>
<dbReference type="PRINTS" id="PR00971">
    <property type="entry name" value="RIBOSOMALS10"/>
</dbReference>
<dbReference type="SMART" id="SM01403">
    <property type="entry name" value="Ribosomal_S10"/>
    <property type="match status" value="1"/>
</dbReference>
<dbReference type="SUPFAM" id="SSF54999">
    <property type="entry name" value="Ribosomal protein S10"/>
    <property type="match status" value="1"/>
</dbReference>
<dbReference type="PROSITE" id="PS00361">
    <property type="entry name" value="RIBOSOMAL_S10"/>
    <property type="match status" value="1"/>
</dbReference>
<proteinExistence type="inferred from homology"/>
<sequence length="103" mass="11781">MQNQRIRIRLKAFDHRLIDQSTAEIVETAKRTGAQVRGPIPLPTRKERFTILISPHVNKDARDQYEIRTHKRLVDIVEPTEKTVDALMRLDLAAGVDVQISLG</sequence>
<accession>Q2NQM1</accession>
<gene>
    <name evidence="1" type="primary">rpsJ</name>
    <name type="ordered locus">SG2279</name>
</gene>
<name>RS10_SODGM</name>
<evidence type="ECO:0000255" key="1">
    <source>
        <dbReference type="HAMAP-Rule" id="MF_00508"/>
    </source>
</evidence>
<evidence type="ECO:0000305" key="2"/>
<keyword id="KW-0687">Ribonucleoprotein</keyword>
<keyword id="KW-0689">Ribosomal protein</keyword>
<organism>
    <name type="scientific">Sodalis glossinidius (strain morsitans)</name>
    <dbReference type="NCBI Taxonomy" id="343509"/>
    <lineage>
        <taxon>Bacteria</taxon>
        <taxon>Pseudomonadati</taxon>
        <taxon>Pseudomonadota</taxon>
        <taxon>Gammaproteobacteria</taxon>
        <taxon>Enterobacterales</taxon>
        <taxon>Bruguierivoracaceae</taxon>
        <taxon>Sodalis</taxon>
    </lineage>
</organism>
<comment type="function">
    <text evidence="1">Involved in the binding of tRNA to the ribosomes.</text>
</comment>
<comment type="subunit">
    <text evidence="1">Part of the 30S ribosomal subunit.</text>
</comment>
<comment type="similarity">
    <text evidence="1">Belongs to the universal ribosomal protein uS10 family.</text>
</comment>
<feature type="chain" id="PRO_0000237097" description="Small ribosomal subunit protein uS10">
    <location>
        <begin position="1"/>
        <end position="103"/>
    </location>
</feature>
<protein>
    <recommendedName>
        <fullName evidence="1">Small ribosomal subunit protein uS10</fullName>
    </recommendedName>
    <alternativeName>
        <fullName evidence="2">30S ribosomal protein S10</fullName>
    </alternativeName>
</protein>
<reference key="1">
    <citation type="journal article" date="2006" name="Genome Res.">
        <title>Massive genome erosion and functional adaptations provide insights into the symbiotic lifestyle of Sodalis glossinidius in the tsetse host.</title>
        <authorList>
            <person name="Toh H."/>
            <person name="Weiss B.L."/>
            <person name="Perkin S.A.H."/>
            <person name="Yamashita A."/>
            <person name="Oshima K."/>
            <person name="Hattori M."/>
            <person name="Aksoy S."/>
        </authorList>
    </citation>
    <scope>NUCLEOTIDE SEQUENCE [LARGE SCALE GENOMIC DNA]</scope>
    <source>
        <strain>morsitans</strain>
    </source>
</reference>